<organism>
    <name type="scientific">Rhodopseudomonas palustris (strain ATCC BAA-98 / CGA009)</name>
    <dbReference type="NCBI Taxonomy" id="258594"/>
    <lineage>
        <taxon>Bacteria</taxon>
        <taxon>Pseudomonadati</taxon>
        <taxon>Pseudomonadota</taxon>
        <taxon>Alphaproteobacteria</taxon>
        <taxon>Hyphomicrobiales</taxon>
        <taxon>Nitrobacteraceae</taxon>
        <taxon>Rhodopseudomonas</taxon>
    </lineage>
</organism>
<accession>Q6N274</accession>
<comment type="mass spectrometry" mass="10062.7" method="Electrospray" evidence="3"/>
<comment type="similarity">
    <text evidence="1">Belongs to the bacterial ribosomal protein bS21 family.</text>
</comment>
<gene>
    <name evidence="1" type="primary">rpsU</name>
    <name type="ordered locus">RPA4176</name>
</gene>
<keyword id="KW-0687">Ribonucleoprotein</keyword>
<keyword id="KW-0689">Ribosomal protein</keyword>
<name>RS21_RHOPA</name>
<proteinExistence type="evidence at protein level"/>
<feature type="chain" id="PRO_0000224168" description="Small ribosomal subunit protein bS21">
    <location>
        <begin position="1"/>
        <end position="87"/>
    </location>
</feature>
<feature type="region of interest" description="Disordered" evidence="2">
    <location>
        <begin position="35"/>
        <end position="87"/>
    </location>
</feature>
<feature type="compositionally biased region" description="Basic and acidic residues" evidence="2">
    <location>
        <begin position="35"/>
        <end position="52"/>
    </location>
</feature>
<feature type="compositionally biased region" description="Basic residues" evidence="2">
    <location>
        <begin position="53"/>
        <end position="62"/>
    </location>
</feature>
<feature type="compositionally biased region" description="Basic and acidic residues" evidence="2">
    <location>
        <begin position="78"/>
        <end position="87"/>
    </location>
</feature>
<sequence length="87" mass="10064">MQVLVRDNNVDQALKALKKKMQREGIFREMKLRGHYEKPSEKKAREKAEAVRRARKLARKKLQREGLLPSKPKPAFGADRRPSAAAR</sequence>
<protein>
    <recommendedName>
        <fullName evidence="1">Small ribosomal subunit protein bS21</fullName>
    </recommendedName>
    <alternativeName>
        <fullName evidence="4">30S ribosomal protein S21</fullName>
    </alternativeName>
    <alternativeName>
        <fullName>RRP-S21</fullName>
    </alternativeName>
</protein>
<dbReference type="EMBL" id="BX572606">
    <property type="protein sequence ID" value="CAE29617.1"/>
    <property type="molecule type" value="Genomic_DNA"/>
</dbReference>
<dbReference type="RefSeq" id="WP_011159711.1">
    <property type="nucleotide sequence ID" value="NZ_CP116810.1"/>
</dbReference>
<dbReference type="SMR" id="Q6N274"/>
<dbReference type="IntAct" id="Q6N274">
    <property type="interactions" value="1"/>
</dbReference>
<dbReference type="STRING" id="258594.RPA4176"/>
<dbReference type="GeneID" id="66895301"/>
<dbReference type="eggNOG" id="COG0828">
    <property type="taxonomic scope" value="Bacteria"/>
</dbReference>
<dbReference type="HOGENOM" id="CLU_159258_0_0_5"/>
<dbReference type="PhylomeDB" id="Q6N274"/>
<dbReference type="GO" id="GO:1990904">
    <property type="term" value="C:ribonucleoprotein complex"/>
    <property type="evidence" value="ECO:0007669"/>
    <property type="project" value="UniProtKB-KW"/>
</dbReference>
<dbReference type="GO" id="GO:0005840">
    <property type="term" value="C:ribosome"/>
    <property type="evidence" value="ECO:0007669"/>
    <property type="project" value="UniProtKB-KW"/>
</dbReference>
<dbReference type="GO" id="GO:0003735">
    <property type="term" value="F:structural constituent of ribosome"/>
    <property type="evidence" value="ECO:0007669"/>
    <property type="project" value="InterPro"/>
</dbReference>
<dbReference type="GO" id="GO:0006412">
    <property type="term" value="P:translation"/>
    <property type="evidence" value="ECO:0007669"/>
    <property type="project" value="UniProtKB-UniRule"/>
</dbReference>
<dbReference type="Gene3D" id="1.20.5.1150">
    <property type="entry name" value="Ribosomal protein S8"/>
    <property type="match status" value="1"/>
</dbReference>
<dbReference type="HAMAP" id="MF_00358">
    <property type="entry name" value="Ribosomal_bS21"/>
    <property type="match status" value="1"/>
</dbReference>
<dbReference type="InterPro" id="IPR001911">
    <property type="entry name" value="Ribosomal_bS21"/>
</dbReference>
<dbReference type="InterPro" id="IPR018278">
    <property type="entry name" value="Ribosomal_bS21_CS"/>
</dbReference>
<dbReference type="InterPro" id="IPR038380">
    <property type="entry name" value="Ribosomal_bS21_sf"/>
</dbReference>
<dbReference type="NCBIfam" id="TIGR00030">
    <property type="entry name" value="S21p"/>
    <property type="match status" value="1"/>
</dbReference>
<dbReference type="PANTHER" id="PTHR21109">
    <property type="entry name" value="MITOCHONDRIAL 28S RIBOSOMAL PROTEIN S21"/>
    <property type="match status" value="1"/>
</dbReference>
<dbReference type="PANTHER" id="PTHR21109:SF0">
    <property type="entry name" value="SMALL RIBOSOMAL SUBUNIT PROTEIN BS21M"/>
    <property type="match status" value="1"/>
</dbReference>
<dbReference type="Pfam" id="PF01165">
    <property type="entry name" value="Ribosomal_S21"/>
    <property type="match status" value="1"/>
</dbReference>
<dbReference type="PROSITE" id="PS01181">
    <property type="entry name" value="RIBOSOMAL_S21"/>
    <property type="match status" value="1"/>
</dbReference>
<reference key="1">
    <citation type="journal article" date="2004" name="Nat. Biotechnol.">
        <title>Complete genome sequence of the metabolically versatile photosynthetic bacterium Rhodopseudomonas palustris.</title>
        <authorList>
            <person name="Larimer F.W."/>
            <person name="Chain P."/>
            <person name="Hauser L."/>
            <person name="Lamerdin J.E."/>
            <person name="Malfatti S."/>
            <person name="Do L."/>
            <person name="Land M.L."/>
            <person name="Pelletier D.A."/>
            <person name="Beatty J.T."/>
            <person name="Lang A.S."/>
            <person name="Tabita F.R."/>
            <person name="Gibson J.L."/>
            <person name="Hanson T.E."/>
            <person name="Bobst C."/>
            <person name="Torres y Torres J.L."/>
            <person name="Peres C."/>
            <person name="Harrison F.H."/>
            <person name="Gibson J."/>
            <person name="Harwood C.S."/>
        </authorList>
    </citation>
    <scope>NUCLEOTIDE SEQUENCE [LARGE SCALE GENOMIC DNA]</scope>
    <source>
        <strain>ATCC BAA-98 / CGA009</strain>
    </source>
</reference>
<reference key="2">
    <citation type="journal article" date="2004" name="J. Proteome Res.">
        <title>Characterization of the 70S ribosome from Rhodopseudomonas palustris using an integrated 'top-down' and 'bottom-up' mass spectrometric approach.</title>
        <authorList>
            <person name="Strader M.B."/>
            <person name="VerBerkmoes N.C."/>
            <person name="Tabb D.L."/>
            <person name="Connelly H.M."/>
            <person name="Barton J.W."/>
            <person name="Bruce B.D."/>
            <person name="Pelletier D.A."/>
            <person name="Davison B.H."/>
            <person name="Hettich R.L."/>
            <person name="Larimer F.W."/>
            <person name="Hurst G.B."/>
        </authorList>
    </citation>
    <scope>MASS SPECTROMETRY</scope>
    <source>
        <strain>ATCC BAA-98 / CGA009</strain>
    </source>
</reference>
<evidence type="ECO:0000255" key="1">
    <source>
        <dbReference type="HAMAP-Rule" id="MF_00358"/>
    </source>
</evidence>
<evidence type="ECO:0000256" key="2">
    <source>
        <dbReference type="SAM" id="MobiDB-lite"/>
    </source>
</evidence>
<evidence type="ECO:0000269" key="3">
    <source>
    </source>
</evidence>
<evidence type="ECO:0000305" key="4"/>